<feature type="signal peptide" evidence="1">
    <location>
        <begin position="1"/>
        <end position="18"/>
    </location>
</feature>
<feature type="propeptide" id="PRO_0000028361">
    <location>
        <begin position="19"/>
        <end position="24"/>
    </location>
</feature>
<feature type="chain" id="PRO_0000028362" description="Thrombin-like enzyme acutobin">
    <location>
        <begin position="25"/>
        <end position="260"/>
    </location>
</feature>
<feature type="domain" description="Peptidase S1" evidence="3">
    <location>
        <begin position="25"/>
        <end position="251"/>
    </location>
</feature>
<feature type="active site" description="Charge relay system" evidence="1">
    <location>
        <position position="67"/>
    </location>
</feature>
<feature type="active site" description="Charge relay system" evidence="1">
    <location>
        <position position="112"/>
    </location>
</feature>
<feature type="active site" description="Charge relay system" evidence="1">
    <location>
        <position position="206"/>
    </location>
</feature>
<feature type="glycosylation site" description="N-linked (GlcNAc...) asparagine" evidence="2">
    <location>
        <position position="101"/>
    </location>
</feature>
<feature type="glycosylation site" description="N-linked (GlcNAc...) asparagine" evidence="2">
    <location>
        <position position="105"/>
    </location>
</feature>
<feature type="glycosylation site" description="N-linked (GlcNAc...) asparagine" evidence="2">
    <location>
        <position position="124"/>
    </location>
</feature>
<feature type="glycosylation site" description="N-linked (GlcNAc...) asparagine" evidence="2">
    <location>
        <position position="253"/>
    </location>
</feature>
<feature type="disulfide bond" evidence="3">
    <location>
        <begin position="31"/>
        <end position="165"/>
    </location>
</feature>
<feature type="disulfide bond" evidence="3">
    <location>
        <begin position="52"/>
        <end position="68"/>
    </location>
</feature>
<feature type="disulfide bond" evidence="3">
    <location>
        <begin position="102"/>
        <end position="258"/>
    </location>
</feature>
<feature type="disulfide bond" evidence="3">
    <location>
        <begin position="144"/>
        <end position="212"/>
    </location>
</feature>
<feature type="disulfide bond" evidence="3">
    <location>
        <begin position="176"/>
        <end position="191"/>
    </location>
</feature>
<feature type="disulfide bond" evidence="3">
    <location>
        <begin position="202"/>
        <end position="227"/>
    </location>
</feature>
<sequence length="260" mass="28815">MVLIRVLANLLILQLSYAQKSSELVIGGVECDINEHRFLVALYELTSMTFLCGGTLINQEWVVTAAHCDRLQLYLYIGMHDKYVKFDDEQGREPIEKYFYNCSNNLTTRDKDIMLIRLDRPVDNSTHIAPLSLPSRPPSVGSVCRVMGWGAISPSRDVLPDVPHCVNINLVNNAECRRAYPRLPATSRTLCAGVMQGGIDSCNRDSGGPLICDGQFQGVVNWGGNPCAQPNMPALYTKVYDYNDWIRSITAGNTTAACPP</sequence>
<organism>
    <name type="scientific">Deinagkistrodon acutus</name>
    <name type="common">Hundred-pace snake</name>
    <name type="synonym">Agkistrodon acutus</name>
    <dbReference type="NCBI Taxonomy" id="36307"/>
    <lineage>
        <taxon>Eukaryota</taxon>
        <taxon>Metazoa</taxon>
        <taxon>Chordata</taxon>
        <taxon>Craniata</taxon>
        <taxon>Vertebrata</taxon>
        <taxon>Euteleostomi</taxon>
        <taxon>Lepidosauria</taxon>
        <taxon>Squamata</taxon>
        <taxon>Bifurcata</taxon>
        <taxon>Unidentata</taxon>
        <taxon>Episquamata</taxon>
        <taxon>Toxicofera</taxon>
        <taxon>Serpentes</taxon>
        <taxon>Colubroidea</taxon>
        <taxon>Viperidae</taxon>
        <taxon>Crotalinae</taxon>
        <taxon>Deinagkistrodon</taxon>
    </lineage>
</organism>
<accession>Q9I8X2</accession>
<keyword id="KW-1204">Blood coagulation cascade activating toxin</keyword>
<keyword id="KW-0903">Direct protein sequencing</keyword>
<keyword id="KW-1015">Disulfide bond</keyword>
<keyword id="KW-0325">Glycoprotein</keyword>
<keyword id="KW-1199">Hemostasis impairing toxin</keyword>
<keyword id="KW-0378">Hydrolase</keyword>
<keyword id="KW-0645">Protease</keyword>
<keyword id="KW-0964">Secreted</keyword>
<keyword id="KW-0720">Serine protease</keyword>
<keyword id="KW-0732">Signal</keyword>
<keyword id="KW-0800">Toxin</keyword>
<keyword id="KW-0865">Zymogen</keyword>
<protein>
    <recommendedName>
        <fullName>Thrombin-like enzyme acutobin</fullName>
        <shortName>SVTLE</shortName>
        <ecNumber>3.4.21.-</ecNumber>
    </recommendedName>
    <alternativeName>
        <fullName>Fibrinogen-clotting enzyme</fullName>
    </alternativeName>
    <alternativeName>
        <fullName>Snake venom serine protease</fullName>
        <shortName>SVSP</shortName>
    </alternativeName>
</protein>
<proteinExistence type="evidence at protein level"/>
<name>VSP1_DEIAC</name>
<dbReference type="EC" id="3.4.21.-"/>
<dbReference type="EMBL" id="AF159057">
    <property type="protein sequence ID" value="AAF76377.1"/>
    <property type="molecule type" value="mRNA"/>
</dbReference>
<dbReference type="SMR" id="Q9I8X2"/>
<dbReference type="MEROPS" id="S01.235"/>
<dbReference type="GO" id="GO:0005576">
    <property type="term" value="C:extracellular region"/>
    <property type="evidence" value="ECO:0007669"/>
    <property type="project" value="UniProtKB-SubCell"/>
</dbReference>
<dbReference type="GO" id="GO:0030141">
    <property type="term" value="C:secretory granule"/>
    <property type="evidence" value="ECO:0007669"/>
    <property type="project" value="TreeGrafter"/>
</dbReference>
<dbReference type="GO" id="GO:0004252">
    <property type="term" value="F:serine-type endopeptidase activity"/>
    <property type="evidence" value="ECO:0007669"/>
    <property type="project" value="InterPro"/>
</dbReference>
<dbReference type="GO" id="GO:0090729">
    <property type="term" value="F:toxin activity"/>
    <property type="evidence" value="ECO:0007669"/>
    <property type="project" value="UniProtKB-KW"/>
</dbReference>
<dbReference type="GO" id="GO:0006508">
    <property type="term" value="P:proteolysis"/>
    <property type="evidence" value="ECO:0007669"/>
    <property type="project" value="UniProtKB-KW"/>
</dbReference>
<dbReference type="CDD" id="cd00190">
    <property type="entry name" value="Tryp_SPc"/>
    <property type="match status" value="1"/>
</dbReference>
<dbReference type="FunFam" id="2.40.10.10:FF:000158">
    <property type="entry name" value="Thrombin-like enzyme saxthrombin"/>
    <property type="match status" value="1"/>
</dbReference>
<dbReference type="Gene3D" id="2.40.10.10">
    <property type="entry name" value="Trypsin-like serine proteases"/>
    <property type="match status" value="2"/>
</dbReference>
<dbReference type="InterPro" id="IPR009003">
    <property type="entry name" value="Peptidase_S1_PA"/>
</dbReference>
<dbReference type="InterPro" id="IPR043504">
    <property type="entry name" value="Peptidase_S1_PA_chymotrypsin"/>
</dbReference>
<dbReference type="InterPro" id="IPR001314">
    <property type="entry name" value="Peptidase_S1A"/>
</dbReference>
<dbReference type="InterPro" id="IPR001254">
    <property type="entry name" value="Trypsin_dom"/>
</dbReference>
<dbReference type="InterPro" id="IPR018114">
    <property type="entry name" value="TRYPSIN_HIS"/>
</dbReference>
<dbReference type="PANTHER" id="PTHR24271:SF47">
    <property type="entry name" value="KALLIKREIN-1"/>
    <property type="match status" value="1"/>
</dbReference>
<dbReference type="PANTHER" id="PTHR24271">
    <property type="entry name" value="KALLIKREIN-RELATED"/>
    <property type="match status" value="1"/>
</dbReference>
<dbReference type="Pfam" id="PF00089">
    <property type="entry name" value="Trypsin"/>
    <property type="match status" value="1"/>
</dbReference>
<dbReference type="PRINTS" id="PR00722">
    <property type="entry name" value="CHYMOTRYPSIN"/>
</dbReference>
<dbReference type="SMART" id="SM00020">
    <property type="entry name" value="Tryp_SPc"/>
    <property type="match status" value="1"/>
</dbReference>
<dbReference type="SUPFAM" id="SSF50494">
    <property type="entry name" value="Trypsin-like serine proteases"/>
    <property type="match status" value="1"/>
</dbReference>
<dbReference type="PROSITE" id="PS50240">
    <property type="entry name" value="TRYPSIN_DOM"/>
    <property type="match status" value="1"/>
</dbReference>
<dbReference type="PROSITE" id="PS00134">
    <property type="entry name" value="TRYPSIN_HIS"/>
    <property type="match status" value="1"/>
</dbReference>
<reference key="1">
    <citation type="journal article" date="2001" name="Biochem. J.">
        <title>Serine protease isoforms of Deinagkistrodon acutus venom: cloning, sequencing and phylogenetic analysis.</title>
        <authorList>
            <person name="Wang Y.-M."/>
            <person name="Wang S.-R."/>
            <person name="Tsai I.-H."/>
        </authorList>
    </citation>
    <scope>NUCLEOTIDE SEQUENCE [MRNA]</scope>
    <scope>PARTIAL PROTEIN SEQUENCE</scope>
    <scope>FUNCTION</scope>
    <scope>SUBUNIT</scope>
    <source>
        <tissue>Venom gland</tissue>
    </source>
</reference>
<comment type="function">
    <text evidence="4">Thrombin-like snake venom serine protease that coagulates human fibrinogen by hydrolysis of the alpha chains (FGA).</text>
</comment>
<comment type="subunit">
    <text evidence="4">Monomer.</text>
</comment>
<comment type="subcellular location">
    <subcellularLocation>
        <location>Secreted</location>
    </subcellularLocation>
</comment>
<comment type="tissue specificity">
    <text>Expressed by the venom gland.</text>
</comment>
<comment type="PTM">
    <text>N-glycosylated.</text>
</comment>
<comment type="miscellaneous">
    <text evidence="5">Negative results: does not hydrolyze the beta chains of fibrinogen (FGB).</text>
</comment>
<comment type="similarity">
    <text evidence="3">Belongs to the peptidase S1 family. Snake venom subfamily.</text>
</comment>
<evidence type="ECO:0000250" key="1"/>
<evidence type="ECO:0000255" key="2"/>
<evidence type="ECO:0000255" key="3">
    <source>
        <dbReference type="PROSITE-ProRule" id="PRU00274"/>
    </source>
</evidence>
<evidence type="ECO:0000269" key="4">
    <source>
    </source>
</evidence>
<evidence type="ECO:0000305" key="5">
    <source>
    </source>
</evidence>